<keyword id="KW-0963">Cytoplasm</keyword>
<keyword id="KW-0903">Direct protein sequencing</keyword>
<keyword id="KW-0378">Hydrolase</keyword>
<proteinExistence type="evidence at protein level"/>
<name>URE2_BACSB</name>
<comment type="catalytic activity">
    <reaction evidence="1">
        <text>urea + 2 H2O + H(+) = hydrogencarbonate + 2 NH4(+)</text>
        <dbReference type="Rhea" id="RHEA:20557"/>
        <dbReference type="ChEBI" id="CHEBI:15377"/>
        <dbReference type="ChEBI" id="CHEBI:15378"/>
        <dbReference type="ChEBI" id="CHEBI:16199"/>
        <dbReference type="ChEBI" id="CHEBI:17544"/>
        <dbReference type="ChEBI" id="CHEBI:28938"/>
        <dbReference type="EC" id="3.5.1.5"/>
    </reaction>
</comment>
<comment type="pathway">
    <text evidence="1">Nitrogen metabolism; urea degradation; CO(2) and NH(3) from urea (urease route): step 1/1.</text>
</comment>
<comment type="subunit">
    <text evidence="1">Heterotrimer of UreA (gamma), UreB (beta) and UreC (alpha) subunits. Three heterotrimers associate to form the active enzyme.</text>
</comment>
<comment type="subcellular location">
    <subcellularLocation>
        <location evidence="1">Cytoplasm</location>
    </subcellularLocation>
</comment>
<comment type="similarity">
    <text evidence="1">Belongs to the urease beta subunit family.</text>
</comment>
<accession>Q07398</accession>
<protein>
    <recommendedName>
        <fullName evidence="1">Urease subunit beta</fullName>
        <ecNumber evidence="1">3.5.1.5</ecNumber>
    </recommendedName>
    <alternativeName>
        <fullName evidence="1">Urea amidohydrolase subunit beta</fullName>
    </alternativeName>
</protein>
<evidence type="ECO:0000255" key="1">
    <source>
        <dbReference type="HAMAP-Rule" id="MF_01954"/>
    </source>
</evidence>
<sequence length="107" mass="12183">MIPGEYVLKKEPILCNQNKQTIKIRVLNRGDRPVQVGSHFHFFEVNQSLQFHREKAFGMRLNIPAGTAVRFEPGDAKEVEIIPFSGERKVYGLNNVTNGSVEMGKRK</sequence>
<organism>
    <name type="scientific">Bacillus sp. (strain TB-90)</name>
    <dbReference type="NCBI Taxonomy" id="36824"/>
    <lineage>
        <taxon>Bacteria</taxon>
        <taxon>Bacillati</taxon>
        <taxon>Bacillota</taxon>
        <taxon>Bacilli</taxon>
        <taxon>Bacillales</taxon>
        <taxon>Bacillaceae</taxon>
        <taxon>Bacillus</taxon>
    </lineage>
</organism>
<feature type="chain" id="PRO_0000067570" description="Urease subunit beta">
    <location>
        <begin position="1"/>
        <end position="107"/>
    </location>
</feature>
<gene>
    <name evidence="1" type="primary">ureB</name>
</gene>
<reference key="1">
    <citation type="journal article" date="1994" name="J. Bacteriol.">
        <title>Cloning, sequencing, and expression of thermophilic Bacillus sp. strain TB-90 urease gene complex in Escherichia coli.</title>
        <authorList>
            <person name="Maeda M."/>
            <person name="Hidaka M."/>
            <person name="Nakamura A."/>
            <person name="Masaki H."/>
            <person name="Uozumi T."/>
        </authorList>
    </citation>
    <scope>NUCLEOTIDE SEQUENCE [GENOMIC DNA]</scope>
    <scope>PROTEIN SEQUENCE OF 1-14</scope>
</reference>
<dbReference type="EC" id="3.5.1.5" evidence="1"/>
<dbReference type="EMBL" id="D14439">
    <property type="protein sequence ID" value="BAA03324.1"/>
    <property type="molecule type" value="Genomic_DNA"/>
</dbReference>
<dbReference type="PIR" id="B36950">
    <property type="entry name" value="B36950"/>
</dbReference>
<dbReference type="SMR" id="Q07398"/>
<dbReference type="UniPathway" id="UPA00258">
    <property type="reaction ID" value="UER00370"/>
</dbReference>
<dbReference type="GO" id="GO:0035550">
    <property type="term" value="C:urease complex"/>
    <property type="evidence" value="ECO:0007669"/>
    <property type="project" value="InterPro"/>
</dbReference>
<dbReference type="GO" id="GO:0009039">
    <property type="term" value="F:urease activity"/>
    <property type="evidence" value="ECO:0007669"/>
    <property type="project" value="UniProtKB-UniRule"/>
</dbReference>
<dbReference type="GO" id="GO:0043419">
    <property type="term" value="P:urea catabolic process"/>
    <property type="evidence" value="ECO:0007669"/>
    <property type="project" value="UniProtKB-UniRule"/>
</dbReference>
<dbReference type="CDD" id="cd00407">
    <property type="entry name" value="Urease_beta"/>
    <property type="match status" value="1"/>
</dbReference>
<dbReference type="FunFam" id="2.10.150.10:FF:000001">
    <property type="entry name" value="Urease subunit beta"/>
    <property type="match status" value="1"/>
</dbReference>
<dbReference type="Gene3D" id="2.10.150.10">
    <property type="entry name" value="Urease, beta subunit"/>
    <property type="match status" value="1"/>
</dbReference>
<dbReference type="HAMAP" id="MF_01954">
    <property type="entry name" value="Urease_beta"/>
    <property type="match status" value="1"/>
</dbReference>
<dbReference type="InterPro" id="IPR002019">
    <property type="entry name" value="Urease_beta-like"/>
</dbReference>
<dbReference type="InterPro" id="IPR036461">
    <property type="entry name" value="Urease_betasu_sf"/>
</dbReference>
<dbReference type="InterPro" id="IPR050069">
    <property type="entry name" value="Urease_subunit"/>
</dbReference>
<dbReference type="NCBIfam" id="NF009682">
    <property type="entry name" value="PRK13203.1"/>
    <property type="match status" value="1"/>
</dbReference>
<dbReference type="NCBIfam" id="TIGR00192">
    <property type="entry name" value="urease_beta"/>
    <property type="match status" value="1"/>
</dbReference>
<dbReference type="PANTHER" id="PTHR33569">
    <property type="entry name" value="UREASE"/>
    <property type="match status" value="1"/>
</dbReference>
<dbReference type="PANTHER" id="PTHR33569:SF1">
    <property type="entry name" value="UREASE"/>
    <property type="match status" value="1"/>
</dbReference>
<dbReference type="Pfam" id="PF00699">
    <property type="entry name" value="Urease_beta"/>
    <property type="match status" value="1"/>
</dbReference>
<dbReference type="SUPFAM" id="SSF51278">
    <property type="entry name" value="Urease, beta-subunit"/>
    <property type="match status" value="1"/>
</dbReference>